<organism>
    <name type="scientific">Coffea arabica</name>
    <name type="common">Arabian coffee</name>
    <dbReference type="NCBI Taxonomy" id="13443"/>
    <lineage>
        <taxon>Eukaryota</taxon>
        <taxon>Viridiplantae</taxon>
        <taxon>Streptophyta</taxon>
        <taxon>Embryophyta</taxon>
        <taxon>Tracheophyta</taxon>
        <taxon>Spermatophyta</taxon>
        <taxon>Magnoliopsida</taxon>
        <taxon>eudicotyledons</taxon>
        <taxon>Gunneridae</taxon>
        <taxon>Pentapetalae</taxon>
        <taxon>asterids</taxon>
        <taxon>lamiids</taxon>
        <taxon>Gentianales</taxon>
        <taxon>Rubiaceae</taxon>
        <taxon>Ixoroideae</taxon>
        <taxon>Gardenieae complex</taxon>
        <taxon>Bertiereae - Coffeeae clade</taxon>
        <taxon>Coffeeae</taxon>
        <taxon>Coffea</taxon>
    </lineage>
</organism>
<reference key="1">
    <citation type="journal article" date="2007" name="Plant Biotechnol. J.">
        <title>The complete nucleotide sequence of the coffee (Coffea arabica L.) chloroplast genome: organization and implications for biotechnology and phylogenetic relationships amongst angiosperms.</title>
        <authorList>
            <person name="Samson N."/>
            <person name="Bausher M.G."/>
            <person name="Lee S.-B."/>
            <person name="Jansen R.K."/>
            <person name="Daniell H."/>
        </authorList>
    </citation>
    <scope>NUCLEOTIDE SEQUENCE [LARGE SCALE GENOMIC DNA]</scope>
</reference>
<name>NU2C2_COFAR</name>
<keyword id="KW-0150">Chloroplast</keyword>
<keyword id="KW-0472">Membrane</keyword>
<keyword id="KW-0520">NAD</keyword>
<keyword id="KW-0521">NADP</keyword>
<keyword id="KW-0934">Plastid</keyword>
<keyword id="KW-0618">Plastoquinone</keyword>
<keyword id="KW-0874">Quinone</keyword>
<keyword id="KW-1185">Reference proteome</keyword>
<keyword id="KW-0793">Thylakoid</keyword>
<keyword id="KW-1278">Translocase</keyword>
<keyword id="KW-0812">Transmembrane</keyword>
<keyword id="KW-1133">Transmembrane helix</keyword>
<keyword id="KW-0813">Transport</keyword>
<accession>P0CC49</accession>
<accession>A0A380</accession>
<accession>A0A395</accession>
<feature type="chain" id="PRO_0000391262" description="NAD(P)H-quinone oxidoreductase subunit 2 B, chloroplastic">
    <location>
        <begin position="1"/>
        <end position="540"/>
    </location>
</feature>
<feature type="transmembrane region" description="Helical" evidence="1">
    <location>
        <begin position="24"/>
        <end position="44"/>
    </location>
</feature>
<feature type="transmembrane region" description="Helical" evidence="1">
    <location>
        <begin position="57"/>
        <end position="77"/>
    </location>
</feature>
<feature type="transmembrane region" description="Helical" evidence="1">
    <location>
        <begin position="99"/>
        <end position="119"/>
    </location>
</feature>
<feature type="transmembrane region" description="Helical" evidence="1">
    <location>
        <begin position="124"/>
        <end position="144"/>
    </location>
</feature>
<feature type="transmembrane region" description="Helical" evidence="1">
    <location>
        <begin position="149"/>
        <end position="169"/>
    </location>
</feature>
<feature type="transmembrane region" description="Helical" evidence="1">
    <location>
        <begin position="183"/>
        <end position="203"/>
    </location>
</feature>
<feature type="transmembrane region" description="Helical" evidence="1">
    <location>
        <begin position="227"/>
        <end position="247"/>
    </location>
</feature>
<feature type="transmembrane region" description="Helical" evidence="1">
    <location>
        <begin position="325"/>
        <end position="345"/>
    </location>
</feature>
<feature type="transmembrane region" description="Helical" evidence="1">
    <location>
        <begin position="353"/>
        <end position="373"/>
    </location>
</feature>
<feature type="transmembrane region" description="Helical" evidence="1">
    <location>
        <begin position="384"/>
        <end position="404"/>
    </location>
</feature>
<feature type="transmembrane region" description="Helical" evidence="1">
    <location>
        <begin position="425"/>
        <end position="445"/>
    </location>
</feature>
<feature type="transmembrane region" description="Helical" evidence="1">
    <location>
        <begin position="448"/>
        <end position="468"/>
    </location>
</feature>
<feature type="transmembrane region" description="Helical" evidence="1">
    <location>
        <begin position="514"/>
        <end position="534"/>
    </location>
</feature>
<evidence type="ECO:0000255" key="1">
    <source>
        <dbReference type="HAMAP-Rule" id="MF_00445"/>
    </source>
</evidence>
<protein>
    <recommendedName>
        <fullName evidence="1">NAD(P)H-quinone oxidoreductase subunit 2 B, chloroplastic</fullName>
        <ecNumber evidence="1">7.1.1.-</ecNumber>
    </recommendedName>
    <alternativeName>
        <fullName evidence="1">NAD(P)H dehydrogenase, subunit 2 B</fullName>
    </alternativeName>
    <alternativeName>
        <fullName evidence="1">NADH-plastoquinone oxidoreductase subunit 2 B</fullName>
    </alternativeName>
</protein>
<proteinExistence type="inferred from homology"/>
<comment type="function">
    <text evidence="1">NDH shuttles electrons from NAD(P)H:plastoquinone, via FMN and iron-sulfur (Fe-S) centers, to quinones in the photosynthetic chain and possibly in a chloroplast respiratory chain. The immediate electron acceptor for the enzyme in this species is believed to be plastoquinone. Couples the redox reaction to proton translocation, and thus conserves the redox energy in a proton gradient.</text>
</comment>
<comment type="catalytic activity">
    <reaction evidence="1">
        <text>a plastoquinone + NADH + (n+1) H(+)(in) = a plastoquinol + NAD(+) + n H(+)(out)</text>
        <dbReference type="Rhea" id="RHEA:42608"/>
        <dbReference type="Rhea" id="RHEA-COMP:9561"/>
        <dbReference type="Rhea" id="RHEA-COMP:9562"/>
        <dbReference type="ChEBI" id="CHEBI:15378"/>
        <dbReference type="ChEBI" id="CHEBI:17757"/>
        <dbReference type="ChEBI" id="CHEBI:57540"/>
        <dbReference type="ChEBI" id="CHEBI:57945"/>
        <dbReference type="ChEBI" id="CHEBI:62192"/>
    </reaction>
</comment>
<comment type="catalytic activity">
    <reaction evidence="1">
        <text>a plastoquinone + NADPH + (n+1) H(+)(in) = a plastoquinol + NADP(+) + n H(+)(out)</text>
        <dbReference type="Rhea" id="RHEA:42612"/>
        <dbReference type="Rhea" id="RHEA-COMP:9561"/>
        <dbReference type="Rhea" id="RHEA-COMP:9562"/>
        <dbReference type="ChEBI" id="CHEBI:15378"/>
        <dbReference type="ChEBI" id="CHEBI:17757"/>
        <dbReference type="ChEBI" id="CHEBI:57783"/>
        <dbReference type="ChEBI" id="CHEBI:58349"/>
        <dbReference type="ChEBI" id="CHEBI:62192"/>
    </reaction>
</comment>
<comment type="subunit">
    <text evidence="1">NDH is composed of at least 16 different subunits, 5 of which are encoded in the nucleus.</text>
</comment>
<comment type="subcellular location">
    <subcellularLocation>
        <location evidence="1">Plastid</location>
        <location evidence="1">Chloroplast thylakoid membrane</location>
        <topology evidence="1">Multi-pass membrane protein</topology>
    </subcellularLocation>
</comment>
<comment type="similarity">
    <text evidence="1">Belongs to the complex I subunit 2 family.</text>
</comment>
<gene>
    <name evidence="1" type="primary">ndhB2</name>
</gene>
<sequence length="540" mass="60219">MIWHVQNENFILDSTRIFMKAFHLLLFDGSLIFPECILIFGLILLLMIDSSSDQKDIPWLYFIPSTSLVMSITALLFRWREEPMISFSGNFQTNNFNEIFQFLILLCSTLCIPLSVEYIECTEMAITEFLLFVLTATLGGMFLCGANDFITIFVAPECFSLCSYLLSGYTKKDVRSNEATMKYLLMGGASSSILVHGFSWLYGSSGGEIELQEIVNGLINTQMYNSPGISIALIFITVGIGFKLSPAPSHQWTPDVYEGVRFVREIPTSLSISEMFGFFKTPWTCRREISPTPVVAFLSVTSKVAASASATRIFDIPFYFSSNGWHLLLEILAILSMILGNLIAITQTSMKRMLAYSSIGQIGYVIIGIIVGDSNDGYASMITYMLFYISMNLGTFACIVLFGLRTGTDNIRDYAGLYTKDPFLALSLALCLLSLGGLPPLAGFFGKLYLFWCGWQAGLYFLVLIGLLTSVVSIYYYLKIIKLLMTGRNQEITPHVRNYRRSPLRSNNSIELSMIVCVIASTIPGISMNPIIAIAQDSLF</sequence>
<geneLocation type="chloroplast"/>
<dbReference type="EC" id="7.1.1.-" evidence="1"/>
<dbReference type="EMBL" id="EF044213">
    <property type="protein sequence ID" value="ABJ89740.1"/>
    <property type="molecule type" value="Genomic_DNA"/>
</dbReference>
<dbReference type="SMR" id="P0CC49"/>
<dbReference type="OrthoDB" id="1621789at2759"/>
<dbReference type="Proteomes" id="UP000515148">
    <property type="component" value="Unplaced"/>
</dbReference>
<dbReference type="GO" id="GO:0009535">
    <property type="term" value="C:chloroplast thylakoid membrane"/>
    <property type="evidence" value="ECO:0007669"/>
    <property type="project" value="UniProtKB-SubCell"/>
</dbReference>
<dbReference type="GO" id="GO:0008137">
    <property type="term" value="F:NADH dehydrogenase (ubiquinone) activity"/>
    <property type="evidence" value="ECO:0007669"/>
    <property type="project" value="InterPro"/>
</dbReference>
<dbReference type="GO" id="GO:0048038">
    <property type="term" value="F:quinone binding"/>
    <property type="evidence" value="ECO:0007669"/>
    <property type="project" value="UniProtKB-KW"/>
</dbReference>
<dbReference type="GO" id="GO:0042773">
    <property type="term" value="P:ATP synthesis coupled electron transport"/>
    <property type="evidence" value="ECO:0007669"/>
    <property type="project" value="InterPro"/>
</dbReference>
<dbReference type="GO" id="GO:0019684">
    <property type="term" value="P:photosynthesis, light reaction"/>
    <property type="evidence" value="ECO:0007669"/>
    <property type="project" value="UniProtKB-UniRule"/>
</dbReference>
<dbReference type="HAMAP" id="MF_00445">
    <property type="entry name" value="NDH1_NuoN_1"/>
    <property type="match status" value="1"/>
</dbReference>
<dbReference type="InterPro" id="IPR010096">
    <property type="entry name" value="NADH-Q_OxRdtase_suN/2"/>
</dbReference>
<dbReference type="InterPro" id="IPR001750">
    <property type="entry name" value="ND/Mrp_TM"/>
</dbReference>
<dbReference type="InterPro" id="IPR045693">
    <property type="entry name" value="Ndh2_N"/>
</dbReference>
<dbReference type="PANTHER" id="PTHR22773">
    <property type="entry name" value="NADH DEHYDROGENASE"/>
    <property type="match status" value="1"/>
</dbReference>
<dbReference type="Pfam" id="PF19530">
    <property type="entry name" value="Ndh2_N"/>
    <property type="match status" value="1"/>
</dbReference>
<dbReference type="Pfam" id="PF00361">
    <property type="entry name" value="Proton_antipo_M"/>
    <property type="match status" value="2"/>
</dbReference>